<name>CTL2_RAT</name>
<keyword id="KW-0050">Antiport</keyword>
<keyword id="KW-1003">Cell membrane</keyword>
<keyword id="KW-0325">Glycoprotein</keyword>
<keyword id="KW-0472">Membrane</keyword>
<keyword id="KW-0496">Mitochondrion</keyword>
<keyword id="KW-1000">Mitochondrion outer membrane</keyword>
<keyword id="KW-0597">Phosphoprotein</keyword>
<keyword id="KW-1185">Reference proteome</keyword>
<keyword id="KW-0812">Transmembrane</keyword>
<keyword id="KW-1133">Transmembrane helix</keyword>
<keyword id="KW-0813">Transport</keyword>
<reference key="1">
    <citation type="submission" date="2005-09" db="EMBL/GenBank/DDBJ databases">
        <authorList>
            <person name="Mural R.J."/>
            <person name="Adams M.D."/>
            <person name="Myers E.W."/>
            <person name="Smith H.O."/>
            <person name="Venter J.C."/>
        </authorList>
    </citation>
    <scope>NUCLEOTIDE SEQUENCE [LARGE SCALE GENOMIC DNA]</scope>
</reference>
<reference key="2">
    <citation type="journal article" date="2004" name="Genome Res.">
        <title>The status, quality, and expansion of the NIH full-length cDNA project: the Mammalian Gene Collection (MGC).</title>
        <authorList>
            <consortium name="The MGC Project Team"/>
        </authorList>
    </citation>
    <scope>NUCLEOTIDE SEQUENCE [LARGE SCALE MRNA]</scope>
    <source>
        <tissue>Lung</tissue>
    </source>
</reference>
<reference key="3">
    <citation type="journal article" date="2009" name="Arch. Biochem. Biophys.">
        <title>Molecular and functional characterization of choline transporter in rat renal tubule epithelial NRK-52E cells.</title>
        <authorList>
            <person name="Yabuki M."/>
            <person name="Inazu M."/>
            <person name="Yamada T."/>
            <person name="Tajima H."/>
            <person name="Matsumiya T."/>
        </authorList>
    </citation>
    <scope>FUNCTION</scope>
    <scope>TRANSPORTER ACTIVITY</scope>
    <scope>SUBCELLULAR LOCATION</scope>
</reference>
<evidence type="ECO:0000250" key="1"/>
<evidence type="ECO:0000250" key="2">
    <source>
        <dbReference type="UniProtKB" id="Q8IWA5"/>
    </source>
</evidence>
<evidence type="ECO:0000255" key="3"/>
<evidence type="ECO:0000269" key="4">
    <source>
    </source>
</evidence>
<evidence type="ECO:0000305" key="5"/>
<dbReference type="EMBL" id="CH473993">
    <property type="protein sequence ID" value="EDL78302.1"/>
    <property type="molecule type" value="Genomic_DNA"/>
</dbReference>
<dbReference type="EMBL" id="BC168183">
    <property type="protein sequence ID" value="AAI68183.1"/>
    <property type="molecule type" value="mRNA"/>
</dbReference>
<dbReference type="RefSeq" id="NP_001128187.1">
    <property type="nucleotide sequence ID" value="NM_001134715.1"/>
</dbReference>
<dbReference type="SMR" id="B4F795"/>
<dbReference type="BioGRID" id="263910">
    <property type="interactions" value="2"/>
</dbReference>
<dbReference type="FunCoup" id="B4F795">
    <property type="interactions" value="1491"/>
</dbReference>
<dbReference type="STRING" id="10116.ENSRNOP00000051322"/>
<dbReference type="GlyCosmos" id="B4F795">
    <property type="glycosylation" value="3 sites, 2 glycans"/>
</dbReference>
<dbReference type="GlyGen" id="B4F795">
    <property type="glycosylation" value="4 sites, 2 N-linked glycans (1 site)"/>
</dbReference>
<dbReference type="iPTMnet" id="B4F795"/>
<dbReference type="PhosphoSitePlus" id="B4F795"/>
<dbReference type="SwissPalm" id="B4F795"/>
<dbReference type="PaxDb" id="10116-ENSRNOP00000051322"/>
<dbReference type="PeptideAtlas" id="B4F795"/>
<dbReference type="GeneID" id="363024"/>
<dbReference type="KEGG" id="rno:363024"/>
<dbReference type="UCSC" id="RGD:1309680">
    <property type="organism name" value="rat"/>
</dbReference>
<dbReference type="AGR" id="RGD:1309680"/>
<dbReference type="CTD" id="57153"/>
<dbReference type="RGD" id="1309680">
    <property type="gene designation" value="Slc44a2"/>
</dbReference>
<dbReference type="VEuPathDB" id="HostDB:ENSRNOG00000031824"/>
<dbReference type="eggNOG" id="KOG1362">
    <property type="taxonomic scope" value="Eukaryota"/>
</dbReference>
<dbReference type="HOGENOM" id="CLU_017181_3_1_1"/>
<dbReference type="InParanoid" id="B4F795"/>
<dbReference type="OrthoDB" id="420519at2759"/>
<dbReference type="PhylomeDB" id="B4F795"/>
<dbReference type="Reactome" id="R-RNO-1483191">
    <property type="pathway name" value="Synthesis of PC"/>
</dbReference>
<dbReference type="Reactome" id="R-RNO-425366">
    <property type="pathway name" value="Transport of bile salts and organic acids, metal ions and amine compounds"/>
</dbReference>
<dbReference type="Reactome" id="R-RNO-6798695">
    <property type="pathway name" value="Neutrophil degranulation"/>
</dbReference>
<dbReference type="PRO" id="PR:B4F795"/>
<dbReference type="Proteomes" id="UP000002494">
    <property type="component" value="Chromosome 8"/>
</dbReference>
<dbReference type="Proteomes" id="UP000234681">
    <property type="component" value="Chromosome 8"/>
</dbReference>
<dbReference type="Bgee" id="ENSRNOG00000031824">
    <property type="expression patterns" value="Expressed in spleen and 20 other cell types or tissues"/>
</dbReference>
<dbReference type="GO" id="GO:0016020">
    <property type="term" value="C:membrane"/>
    <property type="evidence" value="ECO:0000318"/>
    <property type="project" value="GO_Central"/>
</dbReference>
<dbReference type="GO" id="GO:0005741">
    <property type="term" value="C:mitochondrial outer membrane"/>
    <property type="evidence" value="ECO:0000250"/>
    <property type="project" value="UniProtKB"/>
</dbReference>
<dbReference type="GO" id="GO:0005739">
    <property type="term" value="C:mitochondrion"/>
    <property type="evidence" value="ECO:0000266"/>
    <property type="project" value="RGD"/>
</dbReference>
<dbReference type="GO" id="GO:0005886">
    <property type="term" value="C:plasma membrane"/>
    <property type="evidence" value="ECO:0000250"/>
    <property type="project" value="UniProtKB"/>
</dbReference>
<dbReference type="GO" id="GO:0015297">
    <property type="term" value="F:antiporter activity"/>
    <property type="evidence" value="ECO:0007669"/>
    <property type="project" value="UniProtKB-KW"/>
</dbReference>
<dbReference type="GO" id="GO:0015220">
    <property type="term" value="F:choline transmembrane transporter activity"/>
    <property type="evidence" value="ECO:0000250"/>
    <property type="project" value="UniProtKB"/>
</dbReference>
<dbReference type="GO" id="GO:0034228">
    <property type="term" value="F:ethanolamine transmembrane transporter activity"/>
    <property type="evidence" value="ECO:0000250"/>
    <property type="project" value="UniProtKB"/>
</dbReference>
<dbReference type="GO" id="GO:0022857">
    <property type="term" value="F:transmembrane transporter activity"/>
    <property type="evidence" value="ECO:0000318"/>
    <property type="project" value="GO_Central"/>
</dbReference>
<dbReference type="GO" id="GO:0015871">
    <property type="term" value="P:choline transport"/>
    <property type="evidence" value="ECO:0000250"/>
    <property type="project" value="UniProtKB"/>
</dbReference>
<dbReference type="GO" id="GO:0034229">
    <property type="term" value="P:ethanolamine transport"/>
    <property type="evidence" value="ECO:0000250"/>
    <property type="project" value="UniProtKB"/>
</dbReference>
<dbReference type="GO" id="GO:0055085">
    <property type="term" value="P:transmembrane transport"/>
    <property type="evidence" value="ECO:0000266"/>
    <property type="project" value="RGD"/>
</dbReference>
<dbReference type="InterPro" id="IPR007603">
    <property type="entry name" value="Choline_transptr-like"/>
</dbReference>
<dbReference type="PANTHER" id="PTHR12385">
    <property type="entry name" value="CHOLINE TRANSPORTER-LIKE (SLC FAMILY 44)"/>
    <property type="match status" value="1"/>
</dbReference>
<dbReference type="PANTHER" id="PTHR12385:SF34">
    <property type="entry name" value="CHOLINE TRANSPORTER-LIKE PROTEIN 2"/>
    <property type="match status" value="1"/>
</dbReference>
<dbReference type="Pfam" id="PF04515">
    <property type="entry name" value="Choline_transpo"/>
    <property type="match status" value="1"/>
</dbReference>
<sequence length="705" mass="79897">MGKDSQHYYGKHGTPQKYDPTFKGPIYNRGCTDIICCVLLFLAIVGYVAVGIIAWTHGDPRKVIYPTDSRGEFCGQKGTKNADKPFLFYFNIVKCASPLVLLEFHCPTPQICVKQCPDRYLTFLSARNSRDFDYYKQFCVPGFKNNKGVAEVLRDGECPAVIIPSKPLAQRCFPAIHASKGVLMVGNETTYEDGHGTRKNVTDLVEGAKKANKVLEARQLAMQIFEDYTVSWYWIVIGLVIAMLLSLMFIVLLRFLAGVMVWVMIVMVILVLGYGIFHCYAEYSRLRGEAGSDVSLVDLGFQTDLRVYLHLRQTWMAFMIILSILEVVIILLLIFLRKRILIAIALIKEASRAVGHVMCSMLYPLVTFFLLCLCIAYWASTSVFLSTSNVAVYKIVDDTPCPLLGKTCNPETFPLNESRQCPNGRCQFAFYGGESTYHRALLGLQIFNAFMFFWLANFVLALGQVTLAGAFASYYWAMRKPDDMPAFPLFSAFGRALRYHTGSLAFGSLILAIVQIIRVMLEYLDQRLKAAQNKFAKFLMVCLKCCFWCLEKFIKFLNRNAYIMIAIYGTNFCTSARNAFFLLMRNIIRVAVLDKVTDFLFLLGKLLIVGSVGILAFFFFTHRIRIVQDTAPPLNYYWVPILTVIIGSYLIAHGFFSVYGMCVDTLFLCFLEDLERNDGSAERPYFMSSTLKKLLNKTNKKVAES</sequence>
<comment type="function">
    <text evidence="2 4">Exhibits choline transporter activity, as choline/H+ antiporter (PubMed:19236841). Also acts as a low-affinity ethanolamine/H+ antiporter, regulating the supply of extracellular ethanolamine (Etn) for the CDP-Etn pathway, redistribute intracellular Etn and balance the CDP-Cho and CDP-Etn arms of the Kennedy pathway (By similarity).</text>
</comment>
<comment type="catalytic activity">
    <reaction evidence="4">
        <text>choline(out) + n H(+)(in) = choline(in) + n H(+)(out)</text>
        <dbReference type="Rhea" id="RHEA:75463"/>
        <dbReference type="ChEBI" id="CHEBI:15354"/>
        <dbReference type="ChEBI" id="CHEBI:15378"/>
    </reaction>
</comment>
<comment type="catalytic activity">
    <reaction evidence="2">
        <text>ethanolamine(out) + n H(+)(in) = ethanolamine(in) + n H(+)(out)</text>
        <dbReference type="Rhea" id="RHEA:75467"/>
        <dbReference type="ChEBI" id="CHEBI:15378"/>
        <dbReference type="ChEBI" id="CHEBI:57603"/>
    </reaction>
</comment>
<comment type="subunit">
    <text evidence="2">Interacts with COCH.</text>
</comment>
<comment type="subcellular location">
    <subcellularLocation>
        <location evidence="4">Cell membrane</location>
        <topology evidence="3">Multi-pass membrane protein</topology>
    </subcellularLocation>
    <subcellularLocation>
        <location evidence="4">Mitochondrion outer membrane</location>
        <topology evidence="3">Multi-pass membrane protein</topology>
    </subcellularLocation>
    <text evidence="4">Mainly expressed in mitochondria.</text>
</comment>
<comment type="PTM">
    <text evidence="1">N-glycosylated.</text>
</comment>
<comment type="similarity">
    <text evidence="5">Belongs to the CTL (choline transporter-like) family.</text>
</comment>
<organism>
    <name type="scientific">Rattus norvegicus</name>
    <name type="common">Rat</name>
    <dbReference type="NCBI Taxonomy" id="10116"/>
    <lineage>
        <taxon>Eukaryota</taxon>
        <taxon>Metazoa</taxon>
        <taxon>Chordata</taxon>
        <taxon>Craniata</taxon>
        <taxon>Vertebrata</taxon>
        <taxon>Euteleostomi</taxon>
        <taxon>Mammalia</taxon>
        <taxon>Eutheria</taxon>
        <taxon>Euarchontoglires</taxon>
        <taxon>Glires</taxon>
        <taxon>Rodentia</taxon>
        <taxon>Myomorpha</taxon>
        <taxon>Muroidea</taxon>
        <taxon>Muridae</taxon>
        <taxon>Murinae</taxon>
        <taxon>Rattus</taxon>
    </lineage>
</organism>
<accession>B4F795</accession>
<feature type="chain" id="PRO_0000359715" description="Choline transporter-like protein 2">
    <location>
        <begin position="1"/>
        <end position="705"/>
    </location>
</feature>
<feature type="topological domain" description="Cytoplasmic" evidence="3">
    <location>
        <begin position="1"/>
        <end position="33"/>
    </location>
</feature>
<feature type="transmembrane region" description="Helical" evidence="3">
    <location>
        <begin position="34"/>
        <end position="54"/>
    </location>
</feature>
<feature type="topological domain" description="Extracellular" evidence="3">
    <location>
        <begin position="55"/>
        <end position="232"/>
    </location>
</feature>
<feature type="transmembrane region" description="Helical" evidence="3">
    <location>
        <begin position="233"/>
        <end position="253"/>
    </location>
</feature>
<feature type="topological domain" description="Cytoplasmic" evidence="3">
    <location>
        <begin position="254"/>
        <end position="256"/>
    </location>
</feature>
<feature type="transmembrane region" description="Helical" evidence="3">
    <location>
        <begin position="257"/>
        <end position="277"/>
    </location>
</feature>
<feature type="topological domain" description="Extracellular" evidence="3">
    <location>
        <begin position="278"/>
        <end position="315"/>
    </location>
</feature>
<feature type="transmembrane region" description="Helical" evidence="3">
    <location>
        <begin position="316"/>
        <end position="336"/>
    </location>
</feature>
<feature type="topological domain" description="Cytoplasmic" evidence="3">
    <location>
        <begin position="337"/>
        <end position="364"/>
    </location>
</feature>
<feature type="transmembrane region" description="Helical" evidence="3">
    <location>
        <begin position="365"/>
        <end position="385"/>
    </location>
</feature>
<feature type="topological domain" description="Extracellular" evidence="3">
    <location>
        <begin position="386"/>
        <end position="453"/>
    </location>
</feature>
<feature type="transmembrane region" description="Helical" evidence="3">
    <location>
        <begin position="454"/>
        <end position="476"/>
    </location>
</feature>
<feature type="topological domain" description="Cytoplasmic" evidence="3">
    <location>
        <begin position="477"/>
        <end position="503"/>
    </location>
</feature>
<feature type="transmembrane region" description="Helical" evidence="3">
    <location>
        <begin position="504"/>
        <end position="524"/>
    </location>
</feature>
<feature type="topological domain" description="Extracellular" evidence="3">
    <location>
        <begin position="525"/>
        <end position="562"/>
    </location>
</feature>
<feature type="transmembrane region" description="Helical" evidence="3">
    <location>
        <begin position="563"/>
        <end position="583"/>
    </location>
</feature>
<feature type="topological domain" description="Cytoplasmic" evidence="3">
    <location>
        <begin position="584"/>
        <end position="598"/>
    </location>
</feature>
<feature type="transmembrane region" description="Helical" evidence="3">
    <location>
        <begin position="599"/>
        <end position="619"/>
    </location>
</feature>
<feature type="topological domain" description="Extracellular" evidence="3">
    <location>
        <begin position="620"/>
        <end position="637"/>
    </location>
</feature>
<feature type="transmembrane region" description="Helical" evidence="3">
    <location>
        <begin position="638"/>
        <end position="658"/>
    </location>
</feature>
<feature type="topological domain" description="Cytoplasmic" evidence="3">
    <location>
        <begin position="659"/>
        <end position="705"/>
    </location>
</feature>
<feature type="modified residue" description="Phosphothreonine" evidence="2">
    <location>
        <position position="14"/>
    </location>
</feature>
<feature type="glycosylation site" description="N-linked (GlcNAc...) asparagine" evidence="3">
    <location>
        <position position="187"/>
    </location>
</feature>
<feature type="glycosylation site" description="N-linked (GlcNAc...) asparagine" evidence="3">
    <location>
        <position position="200"/>
    </location>
</feature>
<feature type="glycosylation site" description="N-linked (GlcNAc...) asparagine" evidence="3">
    <location>
        <position position="416"/>
    </location>
</feature>
<protein>
    <recommendedName>
        <fullName>Choline transporter-like protein 2</fullName>
    </recommendedName>
    <alternativeName>
        <fullName>Solute carrier family 44 member 2</fullName>
    </alternativeName>
</protein>
<gene>
    <name type="primary">Slc44a2</name>
    <name type="synonym">Ctl2</name>
</gene>
<proteinExistence type="evidence at transcript level"/>